<feature type="chain" id="PRO_1000097091" description="Pantothenate synthetase">
    <location>
        <begin position="1"/>
        <end position="283"/>
    </location>
</feature>
<feature type="active site" description="Proton donor" evidence="1">
    <location>
        <position position="37"/>
    </location>
</feature>
<feature type="binding site" evidence="1">
    <location>
        <begin position="30"/>
        <end position="37"/>
    </location>
    <ligand>
        <name>ATP</name>
        <dbReference type="ChEBI" id="CHEBI:30616"/>
    </ligand>
</feature>
<feature type="binding site" evidence="1">
    <location>
        <position position="61"/>
    </location>
    <ligand>
        <name>(R)-pantoate</name>
        <dbReference type="ChEBI" id="CHEBI:15980"/>
    </ligand>
</feature>
<feature type="binding site" evidence="1">
    <location>
        <position position="61"/>
    </location>
    <ligand>
        <name>beta-alanine</name>
        <dbReference type="ChEBI" id="CHEBI:57966"/>
    </ligand>
</feature>
<feature type="binding site" evidence="1">
    <location>
        <begin position="149"/>
        <end position="152"/>
    </location>
    <ligand>
        <name>ATP</name>
        <dbReference type="ChEBI" id="CHEBI:30616"/>
    </ligand>
</feature>
<feature type="binding site" evidence="1">
    <location>
        <position position="155"/>
    </location>
    <ligand>
        <name>(R)-pantoate</name>
        <dbReference type="ChEBI" id="CHEBI:15980"/>
    </ligand>
</feature>
<feature type="binding site" evidence="1">
    <location>
        <position position="178"/>
    </location>
    <ligand>
        <name>ATP</name>
        <dbReference type="ChEBI" id="CHEBI:30616"/>
    </ligand>
</feature>
<feature type="binding site" evidence="1">
    <location>
        <begin position="186"/>
        <end position="189"/>
    </location>
    <ligand>
        <name>ATP</name>
        <dbReference type="ChEBI" id="CHEBI:30616"/>
    </ligand>
</feature>
<reference key="1">
    <citation type="submission" date="2007-06" db="EMBL/GenBank/DDBJ databases">
        <authorList>
            <person name="Dodson R.J."/>
            <person name="Harkins D."/>
            <person name="Paulsen I.T."/>
        </authorList>
    </citation>
    <scope>NUCLEOTIDE SEQUENCE [LARGE SCALE GENOMIC DNA]</scope>
    <source>
        <strain>DSM 24068 / PA7</strain>
    </source>
</reference>
<gene>
    <name evidence="1" type="primary">panC</name>
    <name type="ordered locus">PSPA7_5447</name>
</gene>
<evidence type="ECO:0000255" key="1">
    <source>
        <dbReference type="HAMAP-Rule" id="MF_00158"/>
    </source>
</evidence>
<comment type="function">
    <text evidence="1">Catalyzes the condensation of pantoate with beta-alanine in an ATP-dependent reaction via a pantoyl-adenylate intermediate.</text>
</comment>
<comment type="catalytic activity">
    <reaction evidence="1">
        <text>(R)-pantoate + beta-alanine + ATP = (R)-pantothenate + AMP + diphosphate + H(+)</text>
        <dbReference type="Rhea" id="RHEA:10912"/>
        <dbReference type="ChEBI" id="CHEBI:15378"/>
        <dbReference type="ChEBI" id="CHEBI:15980"/>
        <dbReference type="ChEBI" id="CHEBI:29032"/>
        <dbReference type="ChEBI" id="CHEBI:30616"/>
        <dbReference type="ChEBI" id="CHEBI:33019"/>
        <dbReference type="ChEBI" id="CHEBI:57966"/>
        <dbReference type="ChEBI" id="CHEBI:456215"/>
        <dbReference type="EC" id="6.3.2.1"/>
    </reaction>
</comment>
<comment type="pathway">
    <text evidence="1">Cofactor biosynthesis; (R)-pantothenate biosynthesis; (R)-pantothenate from (R)-pantoate and beta-alanine: step 1/1.</text>
</comment>
<comment type="subunit">
    <text evidence="1">Homodimer.</text>
</comment>
<comment type="subcellular location">
    <subcellularLocation>
        <location evidence="1">Cytoplasm</location>
    </subcellularLocation>
</comment>
<comment type="miscellaneous">
    <text evidence="1">The reaction proceeds by a bi uni uni bi ping pong mechanism.</text>
</comment>
<comment type="similarity">
    <text evidence="1">Belongs to the pantothenate synthetase family.</text>
</comment>
<sequence>MNTVKTVRELRAAVARARSEGKRIGFVPTMGNLHAGHAALVKKAGERADFVVVSIFVNPLQFGPSEDLDKYPRTLAADQERLLEAGCHLLFTPGVEEMYPDGMDGQTRIHVPGVSEGLCGASRPGHFEGVATVVSKLLNMVQPDLALFGEKDFQQLAVIRKLVRDLNLPVQIFGEPTVRAADGLALSSRNGYLDEQQRAAAPAIYRTLRQLGERIRAGAEDFPALLADARQALEQAGLRPDYLEIREPISLRPGVPGDRQLVILAAAYLGGTRLIDNLSVHLD</sequence>
<dbReference type="EC" id="6.3.2.1" evidence="1"/>
<dbReference type="EMBL" id="CP000744">
    <property type="protein sequence ID" value="ABR83071.1"/>
    <property type="molecule type" value="Genomic_DNA"/>
</dbReference>
<dbReference type="RefSeq" id="WP_012077483.1">
    <property type="nucleotide sequence ID" value="NC_009656.1"/>
</dbReference>
<dbReference type="SMR" id="A6VCI6"/>
<dbReference type="KEGG" id="pap:PSPA7_5447"/>
<dbReference type="HOGENOM" id="CLU_047148_0_0_6"/>
<dbReference type="UniPathway" id="UPA00028">
    <property type="reaction ID" value="UER00005"/>
</dbReference>
<dbReference type="Proteomes" id="UP000001582">
    <property type="component" value="Chromosome"/>
</dbReference>
<dbReference type="GO" id="GO:0005829">
    <property type="term" value="C:cytosol"/>
    <property type="evidence" value="ECO:0007669"/>
    <property type="project" value="TreeGrafter"/>
</dbReference>
<dbReference type="GO" id="GO:0005524">
    <property type="term" value="F:ATP binding"/>
    <property type="evidence" value="ECO:0007669"/>
    <property type="project" value="UniProtKB-KW"/>
</dbReference>
<dbReference type="GO" id="GO:0004592">
    <property type="term" value="F:pantoate-beta-alanine ligase activity"/>
    <property type="evidence" value="ECO:0007669"/>
    <property type="project" value="UniProtKB-UniRule"/>
</dbReference>
<dbReference type="GO" id="GO:0015940">
    <property type="term" value="P:pantothenate biosynthetic process"/>
    <property type="evidence" value="ECO:0007669"/>
    <property type="project" value="UniProtKB-UniRule"/>
</dbReference>
<dbReference type="CDD" id="cd00560">
    <property type="entry name" value="PanC"/>
    <property type="match status" value="1"/>
</dbReference>
<dbReference type="FunFam" id="3.30.1300.10:FF:000001">
    <property type="entry name" value="Pantothenate synthetase"/>
    <property type="match status" value="1"/>
</dbReference>
<dbReference type="FunFam" id="3.40.50.620:FF:000013">
    <property type="entry name" value="Pantothenate synthetase"/>
    <property type="match status" value="1"/>
</dbReference>
<dbReference type="Gene3D" id="3.40.50.620">
    <property type="entry name" value="HUPs"/>
    <property type="match status" value="1"/>
</dbReference>
<dbReference type="Gene3D" id="3.30.1300.10">
    <property type="entry name" value="Pantoate-beta-alanine ligase, C-terminal domain"/>
    <property type="match status" value="1"/>
</dbReference>
<dbReference type="HAMAP" id="MF_00158">
    <property type="entry name" value="PanC"/>
    <property type="match status" value="1"/>
</dbReference>
<dbReference type="InterPro" id="IPR004821">
    <property type="entry name" value="Cyt_trans-like"/>
</dbReference>
<dbReference type="InterPro" id="IPR003721">
    <property type="entry name" value="Pantoate_ligase"/>
</dbReference>
<dbReference type="InterPro" id="IPR042176">
    <property type="entry name" value="Pantoate_ligase_C"/>
</dbReference>
<dbReference type="InterPro" id="IPR014729">
    <property type="entry name" value="Rossmann-like_a/b/a_fold"/>
</dbReference>
<dbReference type="NCBIfam" id="TIGR00125">
    <property type="entry name" value="cyt_tran_rel"/>
    <property type="match status" value="1"/>
</dbReference>
<dbReference type="NCBIfam" id="TIGR00018">
    <property type="entry name" value="panC"/>
    <property type="match status" value="1"/>
</dbReference>
<dbReference type="PANTHER" id="PTHR21299">
    <property type="entry name" value="CYTIDYLATE KINASE/PANTOATE-BETA-ALANINE LIGASE"/>
    <property type="match status" value="1"/>
</dbReference>
<dbReference type="PANTHER" id="PTHR21299:SF1">
    <property type="entry name" value="PANTOATE--BETA-ALANINE LIGASE"/>
    <property type="match status" value="1"/>
</dbReference>
<dbReference type="Pfam" id="PF02569">
    <property type="entry name" value="Pantoate_ligase"/>
    <property type="match status" value="1"/>
</dbReference>
<dbReference type="SUPFAM" id="SSF52374">
    <property type="entry name" value="Nucleotidylyl transferase"/>
    <property type="match status" value="1"/>
</dbReference>
<name>PANC_PSEP7</name>
<protein>
    <recommendedName>
        <fullName evidence="1">Pantothenate synthetase</fullName>
        <shortName evidence="1">PS</shortName>
        <ecNumber evidence="1">6.3.2.1</ecNumber>
    </recommendedName>
    <alternativeName>
        <fullName evidence="1">Pantoate--beta-alanine ligase</fullName>
    </alternativeName>
    <alternativeName>
        <fullName evidence="1">Pantoate-activating enzyme</fullName>
    </alternativeName>
</protein>
<proteinExistence type="inferred from homology"/>
<organism>
    <name type="scientific">Pseudomonas paraeruginosa (strain DSM 24068 / PA7)</name>
    <name type="common">Pseudomonas aeruginosa (strain PA7)</name>
    <dbReference type="NCBI Taxonomy" id="381754"/>
    <lineage>
        <taxon>Bacteria</taxon>
        <taxon>Pseudomonadati</taxon>
        <taxon>Pseudomonadota</taxon>
        <taxon>Gammaproteobacteria</taxon>
        <taxon>Pseudomonadales</taxon>
        <taxon>Pseudomonadaceae</taxon>
        <taxon>Pseudomonas</taxon>
        <taxon>Pseudomonas paraeruginosa</taxon>
    </lineage>
</organism>
<accession>A6VCI6</accession>
<keyword id="KW-0067">ATP-binding</keyword>
<keyword id="KW-0963">Cytoplasm</keyword>
<keyword id="KW-0436">Ligase</keyword>
<keyword id="KW-0547">Nucleotide-binding</keyword>
<keyword id="KW-0566">Pantothenate biosynthesis</keyword>